<reference key="1">
    <citation type="submission" date="2007-11" db="EMBL/GenBank/DDBJ databases">
        <title>Complete genome sequence of Clostridium phytofermentans ISDg.</title>
        <authorList>
            <person name="Leschine S.B."/>
            <person name="Warnick T.A."/>
            <person name="Blanchard J.L."/>
            <person name="Schnell D.J."/>
            <person name="Petit E.L."/>
            <person name="LaTouf W.G."/>
            <person name="Copeland A."/>
            <person name="Lucas S."/>
            <person name="Lapidus A."/>
            <person name="Barry K."/>
            <person name="Glavina del Rio T."/>
            <person name="Dalin E."/>
            <person name="Tice H."/>
            <person name="Pitluck S."/>
            <person name="Kiss H."/>
            <person name="Brettin T."/>
            <person name="Bruce D."/>
            <person name="Detter J.C."/>
            <person name="Han C."/>
            <person name="Kuske C."/>
            <person name="Schmutz J."/>
            <person name="Larimer F."/>
            <person name="Land M."/>
            <person name="Hauser L."/>
            <person name="Kyrpides N."/>
            <person name="Kim E.A."/>
            <person name="Richardson P."/>
        </authorList>
    </citation>
    <scope>NUCLEOTIDE SEQUENCE [LARGE SCALE GENOMIC DNA]</scope>
    <source>
        <strain>ATCC 700394 / DSM 18823 / ISDg</strain>
    </source>
</reference>
<protein>
    <recommendedName>
        <fullName evidence="1">Protein GrpE</fullName>
    </recommendedName>
    <alternativeName>
        <fullName evidence="1">HSP-70 cofactor</fullName>
    </alternativeName>
</protein>
<sequence length="224" mass="25860">MADNMDFKDLMADEAEDIIEKDIARVNQASEDIDQENQSEVVDDTTENEDASEEVYEEDTASEDGSKEKKSFFKKKEKKDKKDEKIDELTDRLMRNMAEFENFRKRTEKEKTQMFEVGAKDIIERILPVIDNFERGLAAVSVEEKDSAFVQGIEKIYKQLVTTLEAAGVKQIEAAGKEFDPDFHNAVMHAEDEEYGENIVAEEFQKGYMYRETVVRHSMVKVVN</sequence>
<dbReference type="EMBL" id="CP000885">
    <property type="protein sequence ID" value="ABX42673.1"/>
    <property type="molecule type" value="Genomic_DNA"/>
</dbReference>
<dbReference type="SMR" id="A9KKU1"/>
<dbReference type="STRING" id="357809.Cphy_2312"/>
<dbReference type="KEGG" id="cpy:Cphy_2312"/>
<dbReference type="eggNOG" id="COG0576">
    <property type="taxonomic scope" value="Bacteria"/>
</dbReference>
<dbReference type="HOGENOM" id="CLU_057217_5_0_9"/>
<dbReference type="Proteomes" id="UP000000370">
    <property type="component" value="Chromosome"/>
</dbReference>
<dbReference type="GO" id="GO:0005737">
    <property type="term" value="C:cytoplasm"/>
    <property type="evidence" value="ECO:0007669"/>
    <property type="project" value="UniProtKB-SubCell"/>
</dbReference>
<dbReference type="GO" id="GO:0000774">
    <property type="term" value="F:adenyl-nucleotide exchange factor activity"/>
    <property type="evidence" value="ECO:0007669"/>
    <property type="project" value="InterPro"/>
</dbReference>
<dbReference type="GO" id="GO:0042803">
    <property type="term" value="F:protein homodimerization activity"/>
    <property type="evidence" value="ECO:0007669"/>
    <property type="project" value="InterPro"/>
</dbReference>
<dbReference type="GO" id="GO:0051087">
    <property type="term" value="F:protein-folding chaperone binding"/>
    <property type="evidence" value="ECO:0007669"/>
    <property type="project" value="InterPro"/>
</dbReference>
<dbReference type="GO" id="GO:0051082">
    <property type="term" value="F:unfolded protein binding"/>
    <property type="evidence" value="ECO:0007669"/>
    <property type="project" value="TreeGrafter"/>
</dbReference>
<dbReference type="GO" id="GO:0006457">
    <property type="term" value="P:protein folding"/>
    <property type="evidence" value="ECO:0007669"/>
    <property type="project" value="InterPro"/>
</dbReference>
<dbReference type="CDD" id="cd00446">
    <property type="entry name" value="GrpE"/>
    <property type="match status" value="1"/>
</dbReference>
<dbReference type="FunFam" id="2.30.22.10:FF:000001">
    <property type="entry name" value="Protein GrpE"/>
    <property type="match status" value="1"/>
</dbReference>
<dbReference type="Gene3D" id="3.90.20.20">
    <property type="match status" value="1"/>
</dbReference>
<dbReference type="Gene3D" id="2.30.22.10">
    <property type="entry name" value="Head domain of nucleotide exchange factor GrpE"/>
    <property type="match status" value="1"/>
</dbReference>
<dbReference type="HAMAP" id="MF_01151">
    <property type="entry name" value="GrpE"/>
    <property type="match status" value="1"/>
</dbReference>
<dbReference type="InterPro" id="IPR000740">
    <property type="entry name" value="GrpE"/>
</dbReference>
<dbReference type="InterPro" id="IPR013805">
    <property type="entry name" value="GrpE_coiled_coil"/>
</dbReference>
<dbReference type="InterPro" id="IPR009012">
    <property type="entry name" value="GrpE_head"/>
</dbReference>
<dbReference type="NCBIfam" id="NF010738">
    <property type="entry name" value="PRK14140.1"/>
    <property type="match status" value="1"/>
</dbReference>
<dbReference type="PANTHER" id="PTHR21237">
    <property type="entry name" value="GRPE PROTEIN"/>
    <property type="match status" value="1"/>
</dbReference>
<dbReference type="PANTHER" id="PTHR21237:SF23">
    <property type="entry name" value="GRPE PROTEIN HOMOLOG, MITOCHONDRIAL"/>
    <property type="match status" value="1"/>
</dbReference>
<dbReference type="Pfam" id="PF01025">
    <property type="entry name" value="GrpE"/>
    <property type="match status" value="1"/>
</dbReference>
<dbReference type="PRINTS" id="PR00773">
    <property type="entry name" value="GRPEPROTEIN"/>
</dbReference>
<dbReference type="SUPFAM" id="SSF58014">
    <property type="entry name" value="Coiled-coil domain of nucleotide exchange factor GrpE"/>
    <property type="match status" value="1"/>
</dbReference>
<dbReference type="SUPFAM" id="SSF51064">
    <property type="entry name" value="Head domain of nucleotide exchange factor GrpE"/>
    <property type="match status" value="1"/>
</dbReference>
<dbReference type="PROSITE" id="PS01071">
    <property type="entry name" value="GRPE"/>
    <property type="match status" value="1"/>
</dbReference>
<comment type="function">
    <text evidence="1">Participates actively in the response to hyperosmotic and heat shock by preventing the aggregation of stress-denatured proteins, in association with DnaK and GrpE. It is the nucleotide exchange factor for DnaK and may function as a thermosensor. Unfolded proteins bind initially to DnaJ; upon interaction with the DnaJ-bound protein, DnaK hydrolyzes its bound ATP, resulting in the formation of a stable complex. GrpE releases ADP from DnaK; ATP binding to DnaK triggers the release of the substrate protein, thus completing the reaction cycle. Several rounds of ATP-dependent interactions between DnaJ, DnaK and GrpE are required for fully efficient folding.</text>
</comment>
<comment type="subunit">
    <text evidence="1">Homodimer.</text>
</comment>
<comment type="subcellular location">
    <subcellularLocation>
        <location evidence="1">Cytoplasm</location>
    </subcellularLocation>
</comment>
<comment type="similarity">
    <text evidence="1">Belongs to the GrpE family.</text>
</comment>
<feature type="chain" id="PRO_1000085109" description="Protein GrpE">
    <location>
        <begin position="1"/>
        <end position="224"/>
    </location>
</feature>
<feature type="region of interest" description="Disordered" evidence="2">
    <location>
        <begin position="27"/>
        <end position="77"/>
    </location>
</feature>
<feature type="compositionally biased region" description="Acidic residues" evidence="2">
    <location>
        <begin position="31"/>
        <end position="62"/>
    </location>
</feature>
<evidence type="ECO:0000255" key="1">
    <source>
        <dbReference type="HAMAP-Rule" id="MF_01151"/>
    </source>
</evidence>
<evidence type="ECO:0000256" key="2">
    <source>
        <dbReference type="SAM" id="MobiDB-lite"/>
    </source>
</evidence>
<gene>
    <name evidence="1" type="primary">grpE</name>
    <name type="ordered locus">Cphy_2312</name>
</gene>
<accession>A9KKU1</accession>
<name>GRPE_LACP7</name>
<proteinExistence type="inferred from homology"/>
<organism>
    <name type="scientific">Lachnoclostridium phytofermentans (strain ATCC 700394 / DSM 18823 / ISDg)</name>
    <name type="common">Clostridium phytofermentans</name>
    <dbReference type="NCBI Taxonomy" id="357809"/>
    <lineage>
        <taxon>Bacteria</taxon>
        <taxon>Bacillati</taxon>
        <taxon>Bacillota</taxon>
        <taxon>Clostridia</taxon>
        <taxon>Lachnospirales</taxon>
        <taxon>Lachnospiraceae</taxon>
    </lineage>
</organism>
<keyword id="KW-0143">Chaperone</keyword>
<keyword id="KW-0963">Cytoplasm</keyword>
<keyword id="KW-1185">Reference proteome</keyword>
<keyword id="KW-0346">Stress response</keyword>